<sequence length="394" mass="44937">MKQTWRWYGPNDPVTLSDVRQAGATGVVTALHHIPNGEIWSVDEIQKRKAIVEEAGLEWSVVESVPIHEDIKTHTGQYDLWIKNYQQTLRNLAQCGIYTVCYNFMPVLDWTRTDLEYVLPDGSKALRFDQIEFAAFELHILKRPGAEADYTAEEIAQAERRFATMSEEDKARLTRNIIAGLPGAEEGYTLDQFRQHLATYKDIDKAKLREHFAYFLKAIIPVADEVGVRMAVHPDDPPRPILGLPRIVSTIEDMQWMVETVNSMANGFTMCTGSYGVRADNDLVDMIKQFGPRIYFTHLRSTLREENPKTFHEAAHLHGDVDMYEVVKAIVEEEHRRKAEGSDDLIPMRPDHGHQMLDDLKKKTNPGYSAIGRLKGLAEVRGVELAIQRAFFSK</sequence>
<accession>P0A2M8</accession>
<accession>P43668</accession>
<gene>
    <name type="primary">uxuA</name>
    <name type="ordered locus">STY3306</name>
    <name type="ordered locus">t3056</name>
</gene>
<proteinExistence type="inferred from homology"/>
<comment type="function">
    <text evidence="1">Catalyzes the dehydration of D-mannonate.</text>
</comment>
<comment type="catalytic activity">
    <reaction>
        <text>D-mannonate = 2-dehydro-3-deoxy-D-gluconate + H2O</text>
        <dbReference type="Rhea" id="RHEA:20097"/>
        <dbReference type="ChEBI" id="CHEBI:15377"/>
        <dbReference type="ChEBI" id="CHEBI:17767"/>
        <dbReference type="ChEBI" id="CHEBI:57990"/>
        <dbReference type="EC" id="4.2.1.8"/>
    </reaction>
</comment>
<comment type="cofactor">
    <cofactor evidence="1">
        <name>Fe(2+)</name>
        <dbReference type="ChEBI" id="CHEBI:29033"/>
    </cofactor>
    <cofactor evidence="1">
        <name>Mn(2+)</name>
        <dbReference type="ChEBI" id="CHEBI:29035"/>
    </cofactor>
</comment>
<comment type="pathway">
    <text>Carbohydrate metabolism; pentose and glucuronate interconversion.</text>
</comment>
<comment type="similarity">
    <text evidence="2">Belongs to the mannonate dehydratase family.</text>
</comment>
<keyword id="KW-0408">Iron</keyword>
<keyword id="KW-0456">Lyase</keyword>
<keyword id="KW-0464">Manganese</keyword>
<protein>
    <recommendedName>
        <fullName>Mannonate dehydratase</fullName>
        <ecNumber>4.2.1.8</ecNumber>
    </recommendedName>
    <alternativeName>
        <fullName>D-mannonate hydro-lyase</fullName>
    </alternativeName>
</protein>
<feature type="chain" id="PRO_0000170684" description="Mannonate dehydratase">
    <location>
        <begin position="1"/>
        <end position="394"/>
    </location>
</feature>
<name>UXUA_SALTI</name>
<reference key="1">
    <citation type="journal article" date="2001" name="Nature">
        <title>Complete genome sequence of a multiple drug resistant Salmonella enterica serovar Typhi CT18.</title>
        <authorList>
            <person name="Parkhill J."/>
            <person name="Dougan G."/>
            <person name="James K.D."/>
            <person name="Thomson N.R."/>
            <person name="Pickard D."/>
            <person name="Wain J."/>
            <person name="Churcher C.M."/>
            <person name="Mungall K.L."/>
            <person name="Bentley S.D."/>
            <person name="Holden M.T.G."/>
            <person name="Sebaihia M."/>
            <person name="Baker S."/>
            <person name="Basham D."/>
            <person name="Brooks K."/>
            <person name="Chillingworth T."/>
            <person name="Connerton P."/>
            <person name="Cronin A."/>
            <person name="Davis P."/>
            <person name="Davies R.M."/>
            <person name="Dowd L."/>
            <person name="White N."/>
            <person name="Farrar J."/>
            <person name="Feltwell T."/>
            <person name="Hamlin N."/>
            <person name="Haque A."/>
            <person name="Hien T.T."/>
            <person name="Holroyd S."/>
            <person name="Jagels K."/>
            <person name="Krogh A."/>
            <person name="Larsen T.S."/>
            <person name="Leather S."/>
            <person name="Moule S."/>
            <person name="O'Gaora P."/>
            <person name="Parry C."/>
            <person name="Quail M.A."/>
            <person name="Rutherford K.M."/>
            <person name="Simmonds M."/>
            <person name="Skelton J."/>
            <person name="Stevens K."/>
            <person name="Whitehead S."/>
            <person name="Barrell B.G."/>
        </authorList>
    </citation>
    <scope>NUCLEOTIDE SEQUENCE [LARGE SCALE GENOMIC DNA]</scope>
    <source>
        <strain>CT18</strain>
    </source>
</reference>
<reference key="2">
    <citation type="journal article" date="2003" name="J. Bacteriol.">
        <title>Comparative genomics of Salmonella enterica serovar Typhi strains Ty2 and CT18.</title>
        <authorList>
            <person name="Deng W."/>
            <person name="Liou S.-R."/>
            <person name="Plunkett G. III"/>
            <person name="Mayhew G.F."/>
            <person name="Rose D.J."/>
            <person name="Burland V."/>
            <person name="Kodoyianni V."/>
            <person name="Schwartz D.C."/>
            <person name="Blattner F.R."/>
        </authorList>
    </citation>
    <scope>NUCLEOTIDE SEQUENCE [LARGE SCALE GENOMIC DNA]</scope>
    <source>
        <strain>ATCC 700931 / Ty2</strain>
    </source>
</reference>
<dbReference type="EC" id="4.2.1.8"/>
<dbReference type="EMBL" id="AL513382">
    <property type="protein sequence ID" value="CAD02967.1"/>
    <property type="molecule type" value="Genomic_DNA"/>
</dbReference>
<dbReference type="EMBL" id="AE014613">
    <property type="protein sequence ID" value="AAO70602.1"/>
    <property type="molecule type" value="Genomic_DNA"/>
</dbReference>
<dbReference type="RefSeq" id="NP_457530.1">
    <property type="nucleotide sequence ID" value="NC_003198.1"/>
</dbReference>
<dbReference type="RefSeq" id="WP_000815487.1">
    <property type="nucleotide sequence ID" value="NZ_WSUK01000012.1"/>
</dbReference>
<dbReference type="SMR" id="P0A2M8"/>
<dbReference type="STRING" id="220341.gene:17587170"/>
<dbReference type="KEGG" id="stt:t3056"/>
<dbReference type="KEGG" id="sty:STY3306"/>
<dbReference type="PATRIC" id="fig|220341.7.peg.3366"/>
<dbReference type="eggNOG" id="COG1312">
    <property type="taxonomic scope" value="Bacteria"/>
</dbReference>
<dbReference type="HOGENOM" id="CLU_058621_2_0_6"/>
<dbReference type="OMA" id="ANHLEGD"/>
<dbReference type="OrthoDB" id="9780250at2"/>
<dbReference type="UniPathway" id="UPA00246"/>
<dbReference type="Proteomes" id="UP000000541">
    <property type="component" value="Chromosome"/>
</dbReference>
<dbReference type="Proteomes" id="UP000002670">
    <property type="component" value="Chromosome"/>
</dbReference>
<dbReference type="GO" id="GO:0008198">
    <property type="term" value="F:ferrous iron binding"/>
    <property type="evidence" value="ECO:0007669"/>
    <property type="project" value="TreeGrafter"/>
</dbReference>
<dbReference type="GO" id="GO:0030145">
    <property type="term" value="F:manganese ion binding"/>
    <property type="evidence" value="ECO:0007669"/>
    <property type="project" value="TreeGrafter"/>
</dbReference>
<dbReference type="GO" id="GO:0008927">
    <property type="term" value="F:mannonate dehydratase activity"/>
    <property type="evidence" value="ECO:0007669"/>
    <property type="project" value="UniProtKB-UniRule"/>
</dbReference>
<dbReference type="GO" id="GO:0042840">
    <property type="term" value="P:D-glucuronate catabolic process"/>
    <property type="evidence" value="ECO:0007669"/>
    <property type="project" value="TreeGrafter"/>
</dbReference>
<dbReference type="FunFam" id="3.20.20.150:FF:000004">
    <property type="entry name" value="Mannonate dehydratase"/>
    <property type="match status" value="1"/>
</dbReference>
<dbReference type="FunFam" id="3.20.20.150:FF:000005">
    <property type="entry name" value="Mannonate dehydratase"/>
    <property type="match status" value="1"/>
</dbReference>
<dbReference type="Gene3D" id="3.20.20.150">
    <property type="entry name" value="Divalent-metal-dependent TIM barrel enzymes"/>
    <property type="match status" value="2"/>
</dbReference>
<dbReference type="HAMAP" id="MF_00106">
    <property type="entry name" value="UxuA"/>
    <property type="match status" value="1"/>
</dbReference>
<dbReference type="InterPro" id="IPR004628">
    <property type="entry name" value="Man_deHydtase"/>
</dbReference>
<dbReference type="InterPro" id="IPR036237">
    <property type="entry name" value="Xyl_isomerase-like_sf"/>
</dbReference>
<dbReference type="NCBIfam" id="NF003027">
    <property type="entry name" value="PRK03906.1"/>
    <property type="match status" value="1"/>
</dbReference>
<dbReference type="NCBIfam" id="TIGR00695">
    <property type="entry name" value="uxuA"/>
    <property type="match status" value="1"/>
</dbReference>
<dbReference type="PANTHER" id="PTHR30387">
    <property type="entry name" value="MANNONATE DEHYDRATASE"/>
    <property type="match status" value="1"/>
</dbReference>
<dbReference type="PANTHER" id="PTHR30387:SF2">
    <property type="entry name" value="MANNONATE DEHYDRATASE"/>
    <property type="match status" value="1"/>
</dbReference>
<dbReference type="Pfam" id="PF03786">
    <property type="entry name" value="UxuA"/>
    <property type="match status" value="1"/>
</dbReference>
<dbReference type="PIRSF" id="PIRSF016049">
    <property type="entry name" value="Man_dehyd"/>
    <property type="match status" value="1"/>
</dbReference>
<dbReference type="SUPFAM" id="SSF51658">
    <property type="entry name" value="Xylose isomerase-like"/>
    <property type="match status" value="1"/>
</dbReference>
<evidence type="ECO:0000250" key="1"/>
<evidence type="ECO:0000305" key="2"/>
<organism>
    <name type="scientific">Salmonella typhi</name>
    <dbReference type="NCBI Taxonomy" id="90370"/>
    <lineage>
        <taxon>Bacteria</taxon>
        <taxon>Pseudomonadati</taxon>
        <taxon>Pseudomonadota</taxon>
        <taxon>Gammaproteobacteria</taxon>
        <taxon>Enterobacterales</taxon>
        <taxon>Enterobacteriaceae</taxon>
        <taxon>Salmonella</taxon>
    </lineage>
</organism>